<reference key="1">
    <citation type="journal article" date="2004" name="Proc. Natl. Acad. Sci. U.S.A.">
        <title>Complete genomes of two clinical Staphylococcus aureus strains: evidence for the rapid evolution of virulence and drug resistance.</title>
        <authorList>
            <person name="Holden M.T.G."/>
            <person name="Feil E.J."/>
            <person name="Lindsay J.A."/>
            <person name="Peacock S.J."/>
            <person name="Day N.P.J."/>
            <person name="Enright M.C."/>
            <person name="Foster T.J."/>
            <person name="Moore C.E."/>
            <person name="Hurst L."/>
            <person name="Atkin R."/>
            <person name="Barron A."/>
            <person name="Bason N."/>
            <person name="Bentley S.D."/>
            <person name="Chillingworth C."/>
            <person name="Chillingworth T."/>
            <person name="Churcher C."/>
            <person name="Clark L."/>
            <person name="Corton C."/>
            <person name="Cronin A."/>
            <person name="Doggett J."/>
            <person name="Dowd L."/>
            <person name="Feltwell T."/>
            <person name="Hance Z."/>
            <person name="Harris B."/>
            <person name="Hauser H."/>
            <person name="Holroyd S."/>
            <person name="Jagels K."/>
            <person name="James K.D."/>
            <person name="Lennard N."/>
            <person name="Line A."/>
            <person name="Mayes R."/>
            <person name="Moule S."/>
            <person name="Mungall K."/>
            <person name="Ormond D."/>
            <person name="Quail M.A."/>
            <person name="Rabbinowitsch E."/>
            <person name="Rutherford K.M."/>
            <person name="Sanders M."/>
            <person name="Sharp S."/>
            <person name="Simmonds M."/>
            <person name="Stevens K."/>
            <person name="Whitehead S."/>
            <person name="Barrell B.G."/>
            <person name="Spratt B.G."/>
            <person name="Parkhill J."/>
        </authorList>
    </citation>
    <scope>NUCLEOTIDE SEQUENCE [LARGE SCALE GENOMIC DNA]</scope>
    <source>
        <strain>MSSA476</strain>
    </source>
</reference>
<sequence>MAKKKSPGTLAENRKARHDYNIEDTIEAGIVLQGTEIKSIRRGSANLKDSYAQVKNGEMYLNNMHIAPYEEGNRFNHDPLRSRKLLLHKREIIKLGDQTREIGYSIVPLKLYLKHGHCKVLLGVARGKKKYDKRQALKEKAVKRDVARDMKARY</sequence>
<evidence type="ECO:0000255" key="1">
    <source>
        <dbReference type="HAMAP-Rule" id="MF_00023"/>
    </source>
</evidence>
<name>SSRP_STAAS</name>
<organism>
    <name type="scientific">Staphylococcus aureus (strain MSSA476)</name>
    <dbReference type="NCBI Taxonomy" id="282459"/>
    <lineage>
        <taxon>Bacteria</taxon>
        <taxon>Bacillati</taxon>
        <taxon>Bacillota</taxon>
        <taxon>Bacilli</taxon>
        <taxon>Bacillales</taxon>
        <taxon>Staphylococcaceae</taxon>
        <taxon>Staphylococcus</taxon>
    </lineage>
</organism>
<keyword id="KW-0963">Cytoplasm</keyword>
<keyword id="KW-0694">RNA-binding</keyword>
<dbReference type="EMBL" id="BX571857">
    <property type="protein sequence ID" value="CAG42522.1"/>
    <property type="molecule type" value="Genomic_DNA"/>
</dbReference>
<dbReference type="RefSeq" id="WP_001085185.1">
    <property type="nucleotide sequence ID" value="NC_002953.3"/>
</dbReference>
<dbReference type="SMR" id="Q6GB49"/>
<dbReference type="KEGG" id="sas:SAS0747"/>
<dbReference type="HOGENOM" id="CLU_108953_0_0_9"/>
<dbReference type="GO" id="GO:0005829">
    <property type="term" value="C:cytosol"/>
    <property type="evidence" value="ECO:0007669"/>
    <property type="project" value="TreeGrafter"/>
</dbReference>
<dbReference type="GO" id="GO:0003723">
    <property type="term" value="F:RNA binding"/>
    <property type="evidence" value="ECO:0007669"/>
    <property type="project" value="UniProtKB-UniRule"/>
</dbReference>
<dbReference type="GO" id="GO:0070929">
    <property type="term" value="P:trans-translation"/>
    <property type="evidence" value="ECO:0007669"/>
    <property type="project" value="UniProtKB-UniRule"/>
</dbReference>
<dbReference type="CDD" id="cd09294">
    <property type="entry name" value="SmpB"/>
    <property type="match status" value="1"/>
</dbReference>
<dbReference type="Gene3D" id="2.40.280.10">
    <property type="match status" value="1"/>
</dbReference>
<dbReference type="HAMAP" id="MF_00023">
    <property type="entry name" value="SmpB"/>
    <property type="match status" value="1"/>
</dbReference>
<dbReference type="InterPro" id="IPR023620">
    <property type="entry name" value="SmpB"/>
</dbReference>
<dbReference type="InterPro" id="IPR000037">
    <property type="entry name" value="SsrA-bd_prot"/>
</dbReference>
<dbReference type="InterPro" id="IPR020081">
    <property type="entry name" value="SsrA-bd_prot_CS"/>
</dbReference>
<dbReference type="NCBIfam" id="NF003843">
    <property type="entry name" value="PRK05422.1"/>
    <property type="match status" value="1"/>
</dbReference>
<dbReference type="NCBIfam" id="TIGR00086">
    <property type="entry name" value="smpB"/>
    <property type="match status" value="1"/>
</dbReference>
<dbReference type="PANTHER" id="PTHR30308:SF2">
    <property type="entry name" value="SSRA-BINDING PROTEIN"/>
    <property type="match status" value="1"/>
</dbReference>
<dbReference type="PANTHER" id="PTHR30308">
    <property type="entry name" value="TMRNA-BINDING COMPONENT OF TRANS-TRANSLATION TAGGING COMPLEX"/>
    <property type="match status" value="1"/>
</dbReference>
<dbReference type="Pfam" id="PF01668">
    <property type="entry name" value="SmpB"/>
    <property type="match status" value="1"/>
</dbReference>
<dbReference type="SUPFAM" id="SSF74982">
    <property type="entry name" value="Small protein B (SmpB)"/>
    <property type="match status" value="1"/>
</dbReference>
<dbReference type="PROSITE" id="PS01317">
    <property type="entry name" value="SSRP"/>
    <property type="match status" value="1"/>
</dbReference>
<accession>Q6GB49</accession>
<proteinExistence type="inferred from homology"/>
<protein>
    <recommendedName>
        <fullName evidence="1">SsrA-binding protein</fullName>
    </recommendedName>
    <alternativeName>
        <fullName evidence="1">Small protein B</fullName>
    </alternativeName>
</protein>
<feature type="chain" id="PRO_0000103032" description="SsrA-binding protein">
    <location>
        <begin position="1"/>
        <end position="154"/>
    </location>
</feature>
<comment type="function">
    <text evidence="1">Required for rescue of stalled ribosomes mediated by trans-translation. Binds to transfer-messenger RNA (tmRNA), required for stable association of tmRNA with ribosomes. tmRNA and SmpB together mimic tRNA shape, replacing the anticodon stem-loop with SmpB. tmRNA is encoded by the ssrA gene; the 2 termini fold to resemble tRNA(Ala) and it encodes a 'tag peptide', a short internal open reading frame. During trans-translation Ala-aminoacylated tmRNA acts like a tRNA, entering the A-site of stalled ribosomes, displacing the stalled mRNA. The ribosome then switches to translate the ORF on the tmRNA; the nascent peptide is terminated with the 'tag peptide' encoded by the tmRNA and targeted for degradation. The ribosome is freed to recommence translation, which seems to be the essential function of trans-translation.</text>
</comment>
<comment type="subcellular location">
    <subcellularLocation>
        <location evidence="1">Cytoplasm</location>
    </subcellularLocation>
    <text evidence="1">The tmRNA-SmpB complex associates with stalled 70S ribosomes.</text>
</comment>
<comment type="similarity">
    <text evidence="1">Belongs to the SmpB family.</text>
</comment>
<gene>
    <name evidence="1" type="primary">smpB</name>
    <name type="ordered locus">SAS0747</name>
</gene>